<organism>
    <name type="scientific">Parvibaculum lavamentivorans (strain DS-1 / DSM 13023 / NCIMB 13966)</name>
    <dbReference type="NCBI Taxonomy" id="402881"/>
    <lineage>
        <taxon>Bacteria</taxon>
        <taxon>Pseudomonadati</taxon>
        <taxon>Pseudomonadota</taxon>
        <taxon>Alphaproteobacteria</taxon>
        <taxon>Hyphomicrobiales</taxon>
        <taxon>Parvibaculaceae</taxon>
        <taxon>Parvibaculum</taxon>
    </lineage>
</organism>
<proteinExistence type="inferred from homology"/>
<sequence>MAEITASMVKQLRETTGAGMMDCKSALTETGGDMEAAIDWLRTKGLAKAAKKAGRVAAEGLIGVVANGTAGAIVEVNSETDFVARNEQFQKMVSDIASAALSVEGDFDKLVASTYPGSSKSVQDYVTEMVGTIGENMSVRRAGCISVSDGAVAAYVHSQVVPGLGKIGVLVGLESKGDKTKLLELGRQIAMHIAATNPLATRKEEMDPALVERERNVLIAEAKESGRPDNIIEKMVEGRIRKFYEEVVLLSQAFVINPDDTVEKAVKAAEADVGAPITVVGFLRFALGEGIEKEESDFAAEVAAAARG</sequence>
<accession>A7HY18</accession>
<dbReference type="EMBL" id="CP000774">
    <property type="protein sequence ID" value="ABS64801.1"/>
    <property type="molecule type" value="Genomic_DNA"/>
</dbReference>
<dbReference type="RefSeq" id="WP_012112127.1">
    <property type="nucleotide sequence ID" value="NC_009719.1"/>
</dbReference>
<dbReference type="SMR" id="A7HY18"/>
<dbReference type="STRING" id="402881.Plav_3195"/>
<dbReference type="KEGG" id="pla:Plav_3195"/>
<dbReference type="eggNOG" id="COG0264">
    <property type="taxonomic scope" value="Bacteria"/>
</dbReference>
<dbReference type="HOGENOM" id="CLU_047155_2_0_5"/>
<dbReference type="OrthoDB" id="9808348at2"/>
<dbReference type="Proteomes" id="UP000006377">
    <property type="component" value="Chromosome"/>
</dbReference>
<dbReference type="GO" id="GO:0005737">
    <property type="term" value="C:cytoplasm"/>
    <property type="evidence" value="ECO:0007669"/>
    <property type="project" value="UniProtKB-SubCell"/>
</dbReference>
<dbReference type="GO" id="GO:0003746">
    <property type="term" value="F:translation elongation factor activity"/>
    <property type="evidence" value="ECO:0007669"/>
    <property type="project" value="UniProtKB-UniRule"/>
</dbReference>
<dbReference type="CDD" id="cd14275">
    <property type="entry name" value="UBA_EF-Ts"/>
    <property type="match status" value="1"/>
</dbReference>
<dbReference type="FunFam" id="1.10.286.20:FF:000001">
    <property type="entry name" value="Elongation factor Ts"/>
    <property type="match status" value="1"/>
</dbReference>
<dbReference type="FunFam" id="1.10.8.10:FF:000001">
    <property type="entry name" value="Elongation factor Ts"/>
    <property type="match status" value="1"/>
</dbReference>
<dbReference type="Gene3D" id="1.10.286.20">
    <property type="match status" value="1"/>
</dbReference>
<dbReference type="Gene3D" id="1.10.8.10">
    <property type="entry name" value="DNA helicase RuvA subunit, C-terminal domain"/>
    <property type="match status" value="1"/>
</dbReference>
<dbReference type="Gene3D" id="3.30.479.20">
    <property type="entry name" value="Elongation factor Ts, dimerisation domain"/>
    <property type="match status" value="2"/>
</dbReference>
<dbReference type="HAMAP" id="MF_00050">
    <property type="entry name" value="EF_Ts"/>
    <property type="match status" value="1"/>
</dbReference>
<dbReference type="InterPro" id="IPR036402">
    <property type="entry name" value="EF-Ts_dimer_sf"/>
</dbReference>
<dbReference type="InterPro" id="IPR001816">
    <property type="entry name" value="Transl_elong_EFTs/EF1B"/>
</dbReference>
<dbReference type="InterPro" id="IPR014039">
    <property type="entry name" value="Transl_elong_EFTs/EF1B_dimer"/>
</dbReference>
<dbReference type="InterPro" id="IPR018101">
    <property type="entry name" value="Transl_elong_Ts_CS"/>
</dbReference>
<dbReference type="InterPro" id="IPR009060">
    <property type="entry name" value="UBA-like_sf"/>
</dbReference>
<dbReference type="NCBIfam" id="TIGR00116">
    <property type="entry name" value="tsf"/>
    <property type="match status" value="1"/>
</dbReference>
<dbReference type="PANTHER" id="PTHR11741">
    <property type="entry name" value="ELONGATION FACTOR TS"/>
    <property type="match status" value="1"/>
</dbReference>
<dbReference type="PANTHER" id="PTHR11741:SF0">
    <property type="entry name" value="ELONGATION FACTOR TS, MITOCHONDRIAL"/>
    <property type="match status" value="1"/>
</dbReference>
<dbReference type="Pfam" id="PF00889">
    <property type="entry name" value="EF_TS"/>
    <property type="match status" value="1"/>
</dbReference>
<dbReference type="SUPFAM" id="SSF54713">
    <property type="entry name" value="Elongation factor Ts (EF-Ts), dimerisation domain"/>
    <property type="match status" value="2"/>
</dbReference>
<dbReference type="SUPFAM" id="SSF46934">
    <property type="entry name" value="UBA-like"/>
    <property type="match status" value="1"/>
</dbReference>
<dbReference type="PROSITE" id="PS01126">
    <property type="entry name" value="EF_TS_1"/>
    <property type="match status" value="1"/>
</dbReference>
<dbReference type="PROSITE" id="PS01127">
    <property type="entry name" value="EF_TS_2"/>
    <property type="match status" value="1"/>
</dbReference>
<evidence type="ECO:0000255" key="1">
    <source>
        <dbReference type="HAMAP-Rule" id="MF_00050"/>
    </source>
</evidence>
<gene>
    <name evidence="1" type="primary">tsf</name>
    <name type="ordered locus">Plav_3195</name>
</gene>
<feature type="chain" id="PRO_1000071124" description="Elongation factor Ts">
    <location>
        <begin position="1"/>
        <end position="308"/>
    </location>
</feature>
<feature type="region of interest" description="Involved in Mg(2+) ion dislocation from EF-Tu" evidence="1">
    <location>
        <begin position="80"/>
        <end position="83"/>
    </location>
</feature>
<keyword id="KW-0963">Cytoplasm</keyword>
<keyword id="KW-0251">Elongation factor</keyword>
<keyword id="KW-0648">Protein biosynthesis</keyword>
<keyword id="KW-1185">Reference proteome</keyword>
<comment type="function">
    <text evidence="1">Associates with the EF-Tu.GDP complex and induces the exchange of GDP to GTP. It remains bound to the aminoacyl-tRNA.EF-Tu.GTP complex up to the GTP hydrolysis stage on the ribosome.</text>
</comment>
<comment type="subcellular location">
    <subcellularLocation>
        <location evidence="1">Cytoplasm</location>
    </subcellularLocation>
</comment>
<comment type="similarity">
    <text evidence="1">Belongs to the EF-Ts family.</text>
</comment>
<protein>
    <recommendedName>
        <fullName evidence="1">Elongation factor Ts</fullName>
        <shortName evidence="1">EF-Ts</shortName>
    </recommendedName>
</protein>
<name>EFTS_PARL1</name>
<reference key="1">
    <citation type="journal article" date="2011" name="Stand. Genomic Sci.">
        <title>Complete genome sequence of Parvibaculum lavamentivorans type strain (DS-1(T)).</title>
        <authorList>
            <person name="Schleheck D."/>
            <person name="Weiss M."/>
            <person name="Pitluck S."/>
            <person name="Bruce D."/>
            <person name="Land M.L."/>
            <person name="Han S."/>
            <person name="Saunders E."/>
            <person name="Tapia R."/>
            <person name="Detter C."/>
            <person name="Brettin T."/>
            <person name="Han J."/>
            <person name="Woyke T."/>
            <person name="Goodwin L."/>
            <person name="Pennacchio L."/>
            <person name="Nolan M."/>
            <person name="Cook A.M."/>
            <person name="Kjelleberg S."/>
            <person name="Thomas T."/>
        </authorList>
    </citation>
    <scope>NUCLEOTIDE SEQUENCE [LARGE SCALE GENOMIC DNA]</scope>
    <source>
        <strain>DS-1 / DSM 13023 / NCIMB 13966</strain>
    </source>
</reference>